<accession>B4N002</accession>
<reference evidence="6" key="1">
    <citation type="journal article" date="2007" name="Nature">
        <title>Evolution of genes and genomes on the Drosophila phylogeny.</title>
        <authorList>
            <consortium name="Drosophila 12 genomes consortium"/>
        </authorList>
    </citation>
    <scope>NUCLEOTIDE SEQUENCE [LARGE SCALE GENOMIC DNA]</scope>
    <source>
        <strain evidence="6">Tucson 14030-0811.24</strain>
    </source>
</reference>
<keyword id="KW-0963">Cytoplasm</keyword>
<keyword id="KW-0217">Developmental protein</keyword>
<keyword id="KW-0256">Endoplasmic reticulum</keyword>
<keyword id="KW-1185">Reference proteome</keyword>
<keyword id="KW-0687">Ribonucleoprotein</keyword>
<keyword id="KW-0689">Ribosomal protein</keyword>
<keyword id="KW-0698">rRNA processing</keyword>
<keyword id="KW-0810">Translation regulation</keyword>
<proteinExistence type="inferred from homology"/>
<gene>
    <name type="primary">RpS21</name>
    <name type="synonym">oho23B</name>
    <name type="ORF">GK24281</name>
</gene>
<organism>
    <name type="scientific">Drosophila willistoni</name>
    <name type="common">Fruit fly</name>
    <dbReference type="NCBI Taxonomy" id="7260"/>
    <lineage>
        <taxon>Eukaryota</taxon>
        <taxon>Metazoa</taxon>
        <taxon>Ecdysozoa</taxon>
        <taxon>Arthropoda</taxon>
        <taxon>Hexapoda</taxon>
        <taxon>Insecta</taxon>
        <taxon>Pterygota</taxon>
        <taxon>Neoptera</taxon>
        <taxon>Endopterygota</taxon>
        <taxon>Diptera</taxon>
        <taxon>Brachycera</taxon>
        <taxon>Muscomorpha</taxon>
        <taxon>Ephydroidea</taxon>
        <taxon>Drosophilidae</taxon>
        <taxon>Drosophila</taxon>
        <taxon>Sophophora</taxon>
    </lineage>
</organism>
<protein>
    <recommendedName>
        <fullName evidence="5">Small ribosomal subunit protein eS21</fullName>
    </recommendedName>
    <alternativeName>
        <fullName evidence="1">40S ribosomal protein S21</fullName>
    </alternativeName>
    <alternativeName>
        <fullName evidence="1">Overgrown hematopoietic organs at 23B</fullName>
    </alternativeName>
</protein>
<dbReference type="EMBL" id="CH963920">
    <property type="protein sequence ID" value="EDW77937.1"/>
    <property type="molecule type" value="Genomic_DNA"/>
</dbReference>
<dbReference type="SMR" id="B4N002"/>
<dbReference type="STRING" id="7260.B4N002"/>
<dbReference type="EnsemblMetazoa" id="FBtr0254932">
    <property type="protein sequence ID" value="FBpp0253424"/>
    <property type="gene ID" value="FBgn0226242"/>
</dbReference>
<dbReference type="EnsemblMetazoa" id="XM_002066915.4">
    <property type="protein sequence ID" value="XP_002066951.1"/>
    <property type="gene ID" value="LOC6643769"/>
</dbReference>
<dbReference type="GeneID" id="6643769"/>
<dbReference type="KEGG" id="dwi:6643769"/>
<dbReference type="CTD" id="6227"/>
<dbReference type="eggNOG" id="KOG3486">
    <property type="taxonomic scope" value="Eukaryota"/>
</dbReference>
<dbReference type="HOGENOM" id="CLU_167122_2_0_1"/>
<dbReference type="OMA" id="GESDACM"/>
<dbReference type="OrthoDB" id="278325at2759"/>
<dbReference type="PhylomeDB" id="B4N002"/>
<dbReference type="ChiTaRS" id="RpS21">
    <property type="organism name" value="fly"/>
</dbReference>
<dbReference type="Proteomes" id="UP000007798">
    <property type="component" value="Unassembled WGS sequence"/>
</dbReference>
<dbReference type="GO" id="GO:0022626">
    <property type="term" value="C:cytosolic ribosome"/>
    <property type="evidence" value="ECO:0007669"/>
    <property type="project" value="EnsemblMetazoa"/>
</dbReference>
<dbReference type="GO" id="GO:1990904">
    <property type="term" value="C:ribonucleoprotein complex"/>
    <property type="evidence" value="ECO:0007669"/>
    <property type="project" value="UniProtKB-KW"/>
</dbReference>
<dbReference type="GO" id="GO:0005840">
    <property type="term" value="C:ribosome"/>
    <property type="evidence" value="ECO:0000250"/>
    <property type="project" value="UniProtKB"/>
</dbReference>
<dbReference type="GO" id="GO:0005791">
    <property type="term" value="C:rough endoplasmic reticulum"/>
    <property type="evidence" value="ECO:0007669"/>
    <property type="project" value="UniProtKB-SubCell"/>
</dbReference>
<dbReference type="GO" id="GO:0043022">
    <property type="term" value="F:ribosome binding"/>
    <property type="evidence" value="ECO:0000250"/>
    <property type="project" value="UniProtKB"/>
</dbReference>
<dbReference type="GO" id="GO:0003735">
    <property type="term" value="F:structural constituent of ribosome"/>
    <property type="evidence" value="ECO:0007669"/>
    <property type="project" value="EnsemblMetazoa"/>
</dbReference>
<dbReference type="GO" id="GO:0048542">
    <property type="term" value="P:lymph gland development"/>
    <property type="evidence" value="ECO:0007669"/>
    <property type="project" value="EnsemblMetazoa"/>
</dbReference>
<dbReference type="GO" id="GO:0042127">
    <property type="term" value="P:regulation of cell population proliferation"/>
    <property type="evidence" value="ECO:0000250"/>
    <property type="project" value="UniProtKB"/>
</dbReference>
<dbReference type="GO" id="GO:0006417">
    <property type="term" value="P:regulation of translation"/>
    <property type="evidence" value="ECO:0007669"/>
    <property type="project" value="UniProtKB-KW"/>
</dbReference>
<dbReference type="GO" id="GO:0006364">
    <property type="term" value="P:rRNA processing"/>
    <property type="evidence" value="ECO:0007669"/>
    <property type="project" value="UniProtKB-KW"/>
</dbReference>
<dbReference type="GO" id="GO:0006412">
    <property type="term" value="P:translation"/>
    <property type="evidence" value="ECO:0007669"/>
    <property type="project" value="InterPro"/>
</dbReference>
<dbReference type="FunFam" id="3.30.1230.20:FF:000001">
    <property type="entry name" value="40S ribosomal protein S21"/>
    <property type="match status" value="1"/>
</dbReference>
<dbReference type="Gene3D" id="3.30.1230.20">
    <property type="match status" value="1"/>
</dbReference>
<dbReference type="InterPro" id="IPR001931">
    <property type="entry name" value="Ribosomal_eS21"/>
</dbReference>
<dbReference type="InterPro" id="IPR018279">
    <property type="entry name" value="Ribosomal_eS21_CS"/>
</dbReference>
<dbReference type="InterPro" id="IPR038579">
    <property type="entry name" value="Ribosomal_eS21_sf"/>
</dbReference>
<dbReference type="PANTHER" id="PTHR10442">
    <property type="entry name" value="40S RIBOSOMAL PROTEIN S21"/>
    <property type="match status" value="1"/>
</dbReference>
<dbReference type="Pfam" id="PF01249">
    <property type="entry name" value="Ribosomal_S21e"/>
    <property type="match status" value="1"/>
</dbReference>
<dbReference type="PIRSF" id="PIRSF002148">
    <property type="entry name" value="Ribosomal_S21e"/>
    <property type="match status" value="1"/>
</dbReference>
<dbReference type="PROSITE" id="PS00996">
    <property type="entry name" value="RIBOSOMAL_S21E"/>
    <property type="match status" value="1"/>
</dbReference>
<name>RS21_DROWI</name>
<evidence type="ECO:0000250" key="1">
    <source>
        <dbReference type="UniProtKB" id="O76927"/>
    </source>
</evidence>
<evidence type="ECO:0000250" key="2">
    <source>
        <dbReference type="UniProtKB" id="P63220"/>
    </source>
</evidence>
<evidence type="ECO:0000250" key="3">
    <source>
        <dbReference type="UniProtKB" id="P63221"/>
    </source>
</evidence>
<evidence type="ECO:0000255" key="4"/>
<evidence type="ECO:0000305" key="5"/>
<evidence type="ECO:0000312" key="6">
    <source>
        <dbReference type="EMBL" id="EDW77937.1"/>
    </source>
</evidence>
<sequence length="83" mass="9167">MENDAGENVDLYVPRKCSASNRIIHAKDHASVQLSIVDVDPETGRQTDGSKTYAICGEIRRMGESDDCIVRLAKKDGLITKNF</sequence>
<feature type="chain" id="PRO_0000395425" description="Small ribosomal subunit protein eS21">
    <location>
        <begin position="1"/>
        <end position="83"/>
    </location>
</feature>
<comment type="function">
    <text evidence="1">May be an associated component of the ribosome rather than a core structural subunit. May act as a translation initiation factor. Has a role in regulation of cell proliferation in the hematopoietic organs and the imaginal disks of larva (By similarity).</text>
</comment>
<comment type="subunit">
    <text evidence="1">Component of the 40S small ribosomal subunit. Interacts with sta.</text>
</comment>
<comment type="subcellular location">
    <subcellularLocation>
        <location evidence="2">Cytoplasm</location>
        <location evidence="2">Cytosol</location>
    </subcellularLocation>
    <subcellularLocation>
        <location evidence="2">Cytoplasm</location>
    </subcellularLocation>
    <subcellularLocation>
        <location evidence="3">Rough endoplasmic reticulum</location>
    </subcellularLocation>
    <text evidence="2 3">Detected on cytosolic polysomes (By similarity). Detected in ribosomes that are associated with the rough endoplasmic reticulum (By similarity).</text>
</comment>
<comment type="similarity">
    <text evidence="4">Belongs to the eukaryotic ribosomal protein eS21 family.</text>
</comment>